<accession>P9WEL3</accession>
<comment type="function">
    <text evidence="3">Cytochrome P450 monooxygenase; part of the cluster that mediates the biosynthesis of a highly modified cyclo-arginine-tryptophan dipeptide (cRW) (PubMed:36702957). The first step of the pathway is perfornmed by the arginine-containing cyclodipeptide synthase (RCPDS) avaA that acts as the scaffold-generating enzyme and is responsible for formation of the cyclo-Arg-Trp (cRW) diketopiperazine. AvaB then acts as a multifunctional flavoenzyme that is responsible for generating the cyclo-Arg-formylkynurenine DKP, which can be deformylated by avaC. AvaB then further catalyzes an additional N-oxidation followed by cyclization and dehydration. The next step is an N-acetylation of the guanidine group catalyzed by the arginine N-acetyltransferase avaD. The roles of the additional enzymes identified within the ava cluster still have to be determined (PubMed:36702957).</text>
</comment>
<comment type="cofactor">
    <cofactor evidence="1">
        <name>heme</name>
        <dbReference type="ChEBI" id="CHEBI:30413"/>
    </cofactor>
</comment>
<comment type="pathway">
    <text evidence="6">Secondary metabolite biosynthesis.</text>
</comment>
<comment type="subcellular location">
    <subcellularLocation>
        <location evidence="2">Membrane</location>
        <topology evidence="2">Single-pass membrane protein</topology>
    </subcellularLocation>
</comment>
<comment type="similarity">
    <text evidence="5">Belongs to the cytochrome P450 family.</text>
</comment>
<comment type="caution">
    <text evidence="5">Lacks the heme-binding cysteine residue and therefore might not act as a functional cytochrome P450 monooxygenase.</text>
</comment>
<gene>
    <name evidence="4" type="primary">avaL</name>
</gene>
<reference key="1">
    <citation type="journal article" date="2023" name="Nat. Chem. Biol.">
        <title>Genome mining for unknown-unknown natural products.</title>
        <authorList>
            <person name="Yee D.A."/>
            <person name="Niwa K."/>
            <person name="Perlatti B."/>
            <person name="Chen M."/>
            <person name="Li Y."/>
            <person name="Tang Y."/>
        </authorList>
    </citation>
    <scope>NUCLEOTIDE SEQUENCE [GENOMIC DNA]</scope>
    <scope>FUNCTION</scope>
    <source>
        <strain>dI-29</strain>
    </source>
</reference>
<dbReference type="EC" id="1.-.-.-" evidence="6"/>
<dbReference type="EMBL" id="OP596311">
    <property type="protein sequence ID" value="UZP48224.1"/>
    <property type="molecule type" value="Genomic_DNA"/>
</dbReference>
<dbReference type="GO" id="GO:0016020">
    <property type="term" value="C:membrane"/>
    <property type="evidence" value="ECO:0007669"/>
    <property type="project" value="UniProtKB-SubCell"/>
</dbReference>
<dbReference type="GO" id="GO:0020037">
    <property type="term" value="F:heme binding"/>
    <property type="evidence" value="ECO:0007669"/>
    <property type="project" value="InterPro"/>
</dbReference>
<dbReference type="GO" id="GO:0005506">
    <property type="term" value="F:iron ion binding"/>
    <property type="evidence" value="ECO:0007669"/>
    <property type="project" value="InterPro"/>
</dbReference>
<dbReference type="GO" id="GO:0004497">
    <property type="term" value="F:monooxygenase activity"/>
    <property type="evidence" value="ECO:0007669"/>
    <property type="project" value="UniProtKB-KW"/>
</dbReference>
<dbReference type="GO" id="GO:0016705">
    <property type="term" value="F:oxidoreductase activity, acting on paired donors, with incorporation or reduction of molecular oxygen"/>
    <property type="evidence" value="ECO:0007669"/>
    <property type="project" value="InterPro"/>
</dbReference>
<dbReference type="GO" id="GO:0019748">
    <property type="term" value="P:secondary metabolic process"/>
    <property type="evidence" value="ECO:0007669"/>
    <property type="project" value="UniProtKB-ARBA"/>
</dbReference>
<dbReference type="CDD" id="cd11041">
    <property type="entry name" value="CYP503A1-like"/>
    <property type="match status" value="1"/>
</dbReference>
<dbReference type="Gene3D" id="1.10.630.10">
    <property type="entry name" value="Cytochrome P450"/>
    <property type="match status" value="1"/>
</dbReference>
<dbReference type="InterPro" id="IPR001128">
    <property type="entry name" value="Cyt_P450"/>
</dbReference>
<dbReference type="InterPro" id="IPR017972">
    <property type="entry name" value="Cyt_P450_CS"/>
</dbReference>
<dbReference type="InterPro" id="IPR002403">
    <property type="entry name" value="Cyt_P450_E_grp-IV"/>
</dbReference>
<dbReference type="InterPro" id="IPR036396">
    <property type="entry name" value="Cyt_P450_sf"/>
</dbReference>
<dbReference type="PANTHER" id="PTHR46206">
    <property type="entry name" value="CYTOCHROME P450"/>
    <property type="match status" value="1"/>
</dbReference>
<dbReference type="PANTHER" id="PTHR46206:SF1">
    <property type="entry name" value="P450, PUTATIVE (EUROFUNG)-RELATED"/>
    <property type="match status" value="1"/>
</dbReference>
<dbReference type="Pfam" id="PF00067">
    <property type="entry name" value="p450"/>
    <property type="match status" value="1"/>
</dbReference>
<dbReference type="PRINTS" id="PR00465">
    <property type="entry name" value="EP450IV"/>
</dbReference>
<dbReference type="SUPFAM" id="SSF48264">
    <property type="entry name" value="Cytochrome P450"/>
    <property type="match status" value="1"/>
</dbReference>
<dbReference type="PROSITE" id="PS00086">
    <property type="entry name" value="CYTOCHROME_P450"/>
    <property type="match status" value="1"/>
</dbReference>
<name>AVAL_ASPVE</name>
<keyword id="KW-0349">Heme</keyword>
<keyword id="KW-0408">Iron</keyword>
<keyword id="KW-0472">Membrane</keyword>
<keyword id="KW-0479">Metal-binding</keyword>
<keyword id="KW-0503">Monooxygenase</keyword>
<keyword id="KW-0560">Oxidoreductase</keyword>
<keyword id="KW-0812">Transmembrane</keyword>
<keyword id="KW-1133">Transmembrane helix</keyword>
<evidence type="ECO:0000250" key="1">
    <source>
        <dbReference type="UniProtKB" id="P04798"/>
    </source>
</evidence>
<evidence type="ECO:0000255" key="2"/>
<evidence type="ECO:0000269" key="3">
    <source>
    </source>
</evidence>
<evidence type="ECO:0000303" key="4">
    <source>
    </source>
</evidence>
<evidence type="ECO:0000305" key="5"/>
<evidence type="ECO:0000305" key="6">
    <source>
    </source>
</evidence>
<organism>
    <name type="scientific">Aspergillus versicolor</name>
    <dbReference type="NCBI Taxonomy" id="46472"/>
    <lineage>
        <taxon>Eukaryota</taxon>
        <taxon>Fungi</taxon>
        <taxon>Dikarya</taxon>
        <taxon>Ascomycota</taxon>
        <taxon>Pezizomycotina</taxon>
        <taxon>Eurotiomycetes</taxon>
        <taxon>Eurotiomycetidae</taxon>
        <taxon>Eurotiales</taxon>
        <taxon>Aspergillaceae</taxon>
        <taxon>Aspergillus</taxon>
        <taxon>Aspergillus subgen. Nidulantes</taxon>
    </lineage>
</organism>
<protein>
    <recommendedName>
        <fullName evidence="4">Cytochrome P450 monooxygenase avaL</fullName>
        <ecNumber evidence="6">1.-.-.-</ecNumber>
    </recommendedName>
    <alternativeName>
        <fullName evidence="4">Ava biosynthesis cluster protein L</fullName>
    </alternativeName>
</protein>
<proteinExistence type="inferred from homology"/>
<feature type="chain" id="PRO_0000461012" description="Cytochrome P450 monooxygenase avaL">
    <location>
        <begin position="1"/>
        <end position="561"/>
    </location>
</feature>
<feature type="transmembrane region" description="Helical" evidence="2">
    <location>
        <begin position="19"/>
        <end position="39"/>
    </location>
</feature>
<feature type="binding site" description="axial binding residue" evidence="1">
    <location>
        <position position="508"/>
    </location>
    <ligand>
        <name>heme</name>
        <dbReference type="ChEBI" id="CHEBI:30413"/>
    </ligand>
    <ligandPart>
        <name>Fe</name>
        <dbReference type="ChEBI" id="CHEBI:18248"/>
    </ligandPart>
</feature>
<sequence>MLASGVVYFLETHVSWSSIAASCALVCIVSACYVVWSLLHVPYDQGIPAVGIPKGILGRAKAVYDSIAHGDVPIAEGYRSVSSEPFKAATEALTVAQWQHNKSGQIFRVPSLMDSFSFVYVIPSPLIPQYNAAPEERVSFTSGLEHLDLTPYTLLSHRFTQSPLHLGALRSTLSGGREVEVLADEVATSFTTSWKFPSQWTTIPNLYYSLLDIITRDVNRAYVGAEFCRNRDYIETIIDFTPEVVRCRTILRLIPGFLRPIVSPYVLRHNRARRDKIHSILGDEIKKRKSMLGSKDSSKPTDLLQALIVEANKSPQSTAESDPKMLVTRLLALNFVGNRTASVAFTHAIWSLLHCESQGLGYWNAMREEVENIFASDDSDEINESKKHYQAQGARWMRWNKTHTAQMGLVESFLKESLRYNTDTNLECKRMIVDPEGYRFKNGMNLKRGTVSAVPIWQIHHDPDLYPEPEDFDARRFLQGDGGAQGRKVGMQTTSEYFLAFGVGKHACPGRFFASQHLKLLLAFILLNYDIQPVSRPEDEWYGSSHMPNMAAGLTIRARQD</sequence>